<organism>
    <name type="scientific">Bacillus cereus (strain 03BB102)</name>
    <dbReference type="NCBI Taxonomy" id="572264"/>
    <lineage>
        <taxon>Bacteria</taxon>
        <taxon>Bacillati</taxon>
        <taxon>Bacillota</taxon>
        <taxon>Bacilli</taxon>
        <taxon>Bacillales</taxon>
        <taxon>Bacillaceae</taxon>
        <taxon>Bacillus</taxon>
        <taxon>Bacillus cereus group</taxon>
    </lineage>
</organism>
<keyword id="KW-0067">ATP-binding</keyword>
<keyword id="KW-0436">Ligase</keyword>
<keyword id="KW-0460">Magnesium</keyword>
<keyword id="KW-0479">Metal-binding</keyword>
<keyword id="KW-0520">NAD</keyword>
<keyword id="KW-0547">Nucleotide-binding</keyword>
<gene>
    <name evidence="1" type="primary">nadE</name>
    <name type="ordered locus">BCA_2060</name>
</gene>
<feature type="chain" id="PRO_1000191496" description="NH(3)-dependent NAD(+) synthetase">
    <location>
        <begin position="1"/>
        <end position="272"/>
    </location>
</feature>
<feature type="binding site" evidence="1">
    <location>
        <begin position="45"/>
        <end position="52"/>
    </location>
    <ligand>
        <name>ATP</name>
        <dbReference type="ChEBI" id="CHEBI:30616"/>
    </ligand>
</feature>
<feature type="binding site" evidence="1">
    <location>
        <position position="51"/>
    </location>
    <ligand>
        <name>Mg(2+)</name>
        <dbReference type="ChEBI" id="CHEBI:18420"/>
    </ligand>
</feature>
<feature type="binding site" evidence="1">
    <location>
        <position position="138"/>
    </location>
    <ligand>
        <name>deamido-NAD(+)</name>
        <dbReference type="ChEBI" id="CHEBI:58437"/>
    </ligand>
</feature>
<feature type="binding site" evidence="1">
    <location>
        <position position="158"/>
    </location>
    <ligand>
        <name>ATP</name>
        <dbReference type="ChEBI" id="CHEBI:30616"/>
    </ligand>
</feature>
<feature type="binding site" evidence="1">
    <location>
        <position position="163"/>
    </location>
    <ligand>
        <name>Mg(2+)</name>
        <dbReference type="ChEBI" id="CHEBI:18420"/>
    </ligand>
</feature>
<feature type="binding site" evidence="1">
    <location>
        <position position="171"/>
    </location>
    <ligand>
        <name>deamido-NAD(+)</name>
        <dbReference type="ChEBI" id="CHEBI:58437"/>
    </ligand>
</feature>
<feature type="binding site" evidence="1">
    <location>
        <position position="178"/>
    </location>
    <ligand>
        <name>deamido-NAD(+)</name>
        <dbReference type="ChEBI" id="CHEBI:58437"/>
    </ligand>
</feature>
<feature type="binding site" evidence="1">
    <location>
        <position position="187"/>
    </location>
    <ligand>
        <name>ATP</name>
        <dbReference type="ChEBI" id="CHEBI:30616"/>
    </ligand>
</feature>
<feature type="binding site" evidence="1">
    <location>
        <position position="209"/>
    </location>
    <ligand>
        <name>ATP</name>
        <dbReference type="ChEBI" id="CHEBI:30616"/>
    </ligand>
</feature>
<feature type="binding site" evidence="1">
    <location>
        <begin position="258"/>
        <end position="259"/>
    </location>
    <ligand>
        <name>deamido-NAD(+)</name>
        <dbReference type="ChEBI" id="CHEBI:58437"/>
    </ligand>
</feature>
<proteinExistence type="inferred from homology"/>
<accession>C1ERC2</accession>
<name>NADE_BACC3</name>
<reference key="1">
    <citation type="submission" date="2009-02" db="EMBL/GenBank/DDBJ databases">
        <title>Genome sequence of Bacillus cereus 03BB102.</title>
        <authorList>
            <person name="Dodson R.J."/>
            <person name="Jackson P."/>
            <person name="Munk A.C."/>
            <person name="Brettin T."/>
            <person name="Bruce D."/>
            <person name="Detter C."/>
            <person name="Tapia R."/>
            <person name="Han C."/>
            <person name="Sutton G."/>
            <person name="Sims D."/>
        </authorList>
    </citation>
    <scope>NUCLEOTIDE SEQUENCE [LARGE SCALE GENOMIC DNA]</scope>
    <source>
        <strain>03BB102</strain>
    </source>
</reference>
<protein>
    <recommendedName>
        <fullName evidence="1">NH(3)-dependent NAD(+) synthetase</fullName>
        <ecNumber evidence="1">6.3.1.5</ecNumber>
    </recommendedName>
</protein>
<evidence type="ECO:0000255" key="1">
    <source>
        <dbReference type="HAMAP-Rule" id="MF_00193"/>
    </source>
</evidence>
<dbReference type="EC" id="6.3.1.5" evidence="1"/>
<dbReference type="EMBL" id="CP001407">
    <property type="protein sequence ID" value="ACO28586.1"/>
    <property type="molecule type" value="Genomic_DNA"/>
</dbReference>
<dbReference type="RefSeq" id="WP_000174886.1">
    <property type="nucleotide sequence ID" value="NZ_CP009318.1"/>
</dbReference>
<dbReference type="SMR" id="C1ERC2"/>
<dbReference type="KEGG" id="bcx:BCA_2060"/>
<dbReference type="PATRIC" id="fig|572264.18.peg.2006"/>
<dbReference type="UniPathway" id="UPA00253">
    <property type="reaction ID" value="UER00333"/>
</dbReference>
<dbReference type="Proteomes" id="UP000002210">
    <property type="component" value="Chromosome"/>
</dbReference>
<dbReference type="GO" id="GO:0005737">
    <property type="term" value="C:cytoplasm"/>
    <property type="evidence" value="ECO:0007669"/>
    <property type="project" value="InterPro"/>
</dbReference>
<dbReference type="GO" id="GO:0005524">
    <property type="term" value="F:ATP binding"/>
    <property type="evidence" value="ECO:0007669"/>
    <property type="project" value="UniProtKB-UniRule"/>
</dbReference>
<dbReference type="GO" id="GO:0004359">
    <property type="term" value="F:glutaminase activity"/>
    <property type="evidence" value="ECO:0007669"/>
    <property type="project" value="InterPro"/>
</dbReference>
<dbReference type="GO" id="GO:0046872">
    <property type="term" value="F:metal ion binding"/>
    <property type="evidence" value="ECO:0007669"/>
    <property type="project" value="UniProtKB-KW"/>
</dbReference>
<dbReference type="GO" id="GO:0003952">
    <property type="term" value="F:NAD+ synthase (glutamine-hydrolyzing) activity"/>
    <property type="evidence" value="ECO:0007669"/>
    <property type="project" value="InterPro"/>
</dbReference>
<dbReference type="GO" id="GO:0008795">
    <property type="term" value="F:NAD+ synthase activity"/>
    <property type="evidence" value="ECO:0007669"/>
    <property type="project" value="UniProtKB-UniRule"/>
</dbReference>
<dbReference type="GO" id="GO:0009435">
    <property type="term" value="P:NAD biosynthetic process"/>
    <property type="evidence" value="ECO:0007669"/>
    <property type="project" value="UniProtKB-UniRule"/>
</dbReference>
<dbReference type="CDD" id="cd00553">
    <property type="entry name" value="NAD_synthase"/>
    <property type="match status" value="1"/>
</dbReference>
<dbReference type="FunFam" id="3.40.50.620:FF:000015">
    <property type="entry name" value="NH(3)-dependent NAD(+) synthetase"/>
    <property type="match status" value="1"/>
</dbReference>
<dbReference type="Gene3D" id="3.40.50.620">
    <property type="entry name" value="HUPs"/>
    <property type="match status" value="1"/>
</dbReference>
<dbReference type="HAMAP" id="MF_00193">
    <property type="entry name" value="NadE_ammonia_dep"/>
    <property type="match status" value="1"/>
</dbReference>
<dbReference type="InterPro" id="IPR022310">
    <property type="entry name" value="NAD/GMP_synthase"/>
</dbReference>
<dbReference type="InterPro" id="IPR003694">
    <property type="entry name" value="NAD_synthase"/>
</dbReference>
<dbReference type="InterPro" id="IPR022926">
    <property type="entry name" value="NH(3)-dep_NAD(+)_synth"/>
</dbReference>
<dbReference type="InterPro" id="IPR014729">
    <property type="entry name" value="Rossmann-like_a/b/a_fold"/>
</dbReference>
<dbReference type="NCBIfam" id="TIGR00552">
    <property type="entry name" value="nadE"/>
    <property type="match status" value="1"/>
</dbReference>
<dbReference type="NCBIfam" id="NF001979">
    <property type="entry name" value="PRK00768.1"/>
    <property type="match status" value="1"/>
</dbReference>
<dbReference type="PANTHER" id="PTHR23090">
    <property type="entry name" value="NH 3 /GLUTAMINE-DEPENDENT NAD + SYNTHETASE"/>
    <property type="match status" value="1"/>
</dbReference>
<dbReference type="PANTHER" id="PTHR23090:SF7">
    <property type="entry name" value="NH(3)-DEPENDENT NAD(+) SYNTHETASE"/>
    <property type="match status" value="1"/>
</dbReference>
<dbReference type="Pfam" id="PF02540">
    <property type="entry name" value="NAD_synthase"/>
    <property type="match status" value="1"/>
</dbReference>
<dbReference type="SUPFAM" id="SSF52402">
    <property type="entry name" value="Adenine nucleotide alpha hydrolases-like"/>
    <property type="match status" value="1"/>
</dbReference>
<comment type="function">
    <text evidence="1">Catalyzes the ATP-dependent amidation of deamido-NAD to form NAD. Uses ammonia as a nitrogen source.</text>
</comment>
<comment type="catalytic activity">
    <reaction evidence="1">
        <text>deamido-NAD(+) + NH4(+) + ATP = AMP + diphosphate + NAD(+) + H(+)</text>
        <dbReference type="Rhea" id="RHEA:21188"/>
        <dbReference type="ChEBI" id="CHEBI:15378"/>
        <dbReference type="ChEBI" id="CHEBI:28938"/>
        <dbReference type="ChEBI" id="CHEBI:30616"/>
        <dbReference type="ChEBI" id="CHEBI:33019"/>
        <dbReference type="ChEBI" id="CHEBI:57540"/>
        <dbReference type="ChEBI" id="CHEBI:58437"/>
        <dbReference type="ChEBI" id="CHEBI:456215"/>
        <dbReference type="EC" id="6.3.1.5"/>
    </reaction>
</comment>
<comment type="pathway">
    <text evidence="1">Cofactor biosynthesis; NAD(+) biosynthesis; NAD(+) from deamido-NAD(+) (ammonia route): step 1/1.</text>
</comment>
<comment type="subunit">
    <text evidence="1">Homodimer.</text>
</comment>
<comment type="similarity">
    <text evidence="1">Belongs to the NAD synthetase family.</text>
</comment>
<sequence>MTLQEQIMKALHVQPVIDPKAEIRKRVDFLKDYVKKTGAKGFVLGISGGQDSTLAGRLAQLAVEEIRNEGGNVTFIAVRLPYKVQKDEDDAQLALQFIQADQSVAFDIASTVDAFSNQYENLLDESLTDFNKGNVKARIRMVTQYAIGGQKGLLVIGTDHAAEAVTGFFTKFGDGGADLLPLTGLTKRQGRALLQELGADERLYLKMPTADLLDEKPGQADETELGITYDQLDDYLEGKTVPADVAEKIEKRYTVSEHKRQVPASMFDDWWK</sequence>